<proteinExistence type="inferred from homology"/>
<keyword id="KW-0997">Cell inner membrane</keyword>
<keyword id="KW-1003">Cell membrane</keyword>
<keyword id="KW-0378">Hydrolase</keyword>
<keyword id="KW-0444">Lipid biosynthesis</keyword>
<keyword id="KW-0443">Lipid metabolism</keyword>
<keyword id="KW-0472">Membrane</keyword>
<keyword id="KW-0594">Phospholipid biosynthesis</keyword>
<keyword id="KW-1208">Phospholipid metabolism</keyword>
<keyword id="KW-1185">Reference proteome</keyword>
<keyword id="KW-0812">Transmembrane</keyword>
<keyword id="KW-1133">Transmembrane helix</keyword>
<name>CDH_HELPY</name>
<accession>Q48248</accession>
<feature type="chain" id="PRO_0000198577" description="CDP-diacylglycerol pyrophosphatase">
    <location>
        <begin position="1"/>
        <end position="244"/>
    </location>
</feature>
<feature type="transmembrane region" description="Helical" evidence="2">
    <location>
        <begin position="7"/>
        <end position="23"/>
    </location>
</feature>
<organism>
    <name type="scientific">Helicobacter pylori (strain ATCC 700392 / 26695)</name>
    <name type="common">Campylobacter pylori</name>
    <dbReference type="NCBI Taxonomy" id="85962"/>
    <lineage>
        <taxon>Bacteria</taxon>
        <taxon>Pseudomonadati</taxon>
        <taxon>Campylobacterota</taxon>
        <taxon>Epsilonproteobacteria</taxon>
        <taxon>Campylobacterales</taxon>
        <taxon>Helicobacteraceae</taxon>
        <taxon>Helicobacter</taxon>
    </lineage>
</organism>
<sequence>MKKAGFLFLAVMAIVVMSLNAKDPNVLRKIVFEKCLPNYEKNQNPSPCIEVKPDAGYVVLKDINGPLQYLLMPTTHISGIESPLLLDPSTPNFFYLSWQARDFMSKKYGQPIPDYAISLTINSSKGRSQNHFHIHISCISLEARKQLDNNLKKINSRWSPLPGGLNGHKYLARRVTESELVQKSPFVMLNKEVPNAYKRMGDYGLAVVQQSDNSFVLLATQFNPLTLNRASAEEIQDHECAILH</sequence>
<comment type="catalytic activity">
    <reaction>
        <text>a CDP-1,2-diacyl-sn-glycerol + H2O = a 1,2-diacyl-sn-glycero-3-phosphate + CMP + 2 H(+)</text>
        <dbReference type="Rhea" id="RHEA:15221"/>
        <dbReference type="ChEBI" id="CHEBI:15377"/>
        <dbReference type="ChEBI" id="CHEBI:15378"/>
        <dbReference type="ChEBI" id="CHEBI:58332"/>
        <dbReference type="ChEBI" id="CHEBI:58608"/>
        <dbReference type="ChEBI" id="CHEBI:60377"/>
        <dbReference type="EC" id="3.6.1.26"/>
    </reaction>
</comment>
<comment type="pathway">
    <text>Phospholipid metabolism; CDP-diacylglycerol degradation; phosphatidate from CDP-diacylglycerol: step 1/1.</text>
</comment>
<comment type="subcellular location">
    <subcellularLocation>
        <location evidence="1">Cell inner membrane</location>
        <topology evidence="1">Single-pass membrane protein</topology>
    </subcellularLocation>
</comment>
<comment type="similarity">
    <text evidence="3">Belongs to the Cdh family.</text>
</comment>
<dbReference type="EC" id="3.6.1.26"/>
<dbReference type="EMBL" id="AE000511">
    <property type="protein sequence ID" value="AAD07921.1"/>
    <property type="molecule type" value="Genomic_DNA"/>
</dbReference>
<dbReference type="EMBL" id="U09549">
    <property type="protein sequence ID" value="AAA92802.1"/>
    <property type="molecule type" value="Genomic_DNA"/>
</dbReference>
<dbReference type="PIR" id="G64628">
    <property type="entry name" value="G64628"/>
</dbReference>
<dbReference type="RefSeq" id="NP_207665.1">
    <property type="nucleotide sequence ID" value="NC_000915.1"/>
</dbReference>
<dbReference type="SMR" id="Q48248"/>
<dbReference type="FunCoup" id="Q48248">
    <property type="interactions" value="15"/>
</dbReference>
<dbReference type="STRING" id="85962.HP_0871"/>
<dbReference type="PaxDb" id="85962-C694_04460"/>
<dbReference type="EnsemblBacteria" id="AAD07921">
    <property type="protein sequence ID" value="AAD07921"/>
    <property type="gene ID" value="HP_0871"/>
</dbReference>
<dbReference type="KEGG" id="heo:C694_04460"/>
<dbReference type="KEGG" id="hpy:HP_0871"/>
<dbReference type="PATRIC" id="fig|85962.47.peg.926"/>
<dbReference type="eggNOG" id="COG2134">
    <property type="taxonomic scope" value="Bacteria"/>
</dbReference>
<dbReference type="InParanoid" id="Q48248"/>
<dbReference type="OrthoDB" id="481399at2"/>
<dbReference type="PhylomeDB" id="Q48248"/>
<dbReference type="UniPathway" id="UPA00609">
    <property type="reaction ID" value="UER00664"/>
</dbReference>
<dbReference type="Proteomes" id="UP000000429">
    <property type="component" value="Chromosome"/>
</dbReference>
<dbReference type="GO" id="GO:0005886">
    <property type="term" value="C:plasma membrane"/>
    <property type="evidence" value="ECO:0007669"/>
    <property type="project" value="UniProtKB-SubCell"/>
</dbReference>
<dbReference type="GO" id="GO:0008715">
    <property type="term" value="F:CDP-diacylglycerol diphosphatase activity"/>
    <property type="evidence" value="ECO:0007669"/>
    <property type="project" value="UniProtKB-UniRule"/>
</dbReference>
<dbReference type="GO" id="GO:0046342">
    <property type="term" value="P:CDP-diacylglycerol catabolic process"/>
    <property type="evidence" value="ECO:0007669"/>
    <property type="project" value="UniProtKB-UniRule"/>
</dbReference>
<dbReference type="GO" id="GO:0008654">
    <property type="term" value="P:phospholipid biosynthetic process"/>
    <property type="evidence" value="ECO:0007669"/>
    <property type="project" value="UniProtKB-KW"/>
</dbReference>
<dbReference type="Gene3D" id="3.30.428.30">
    <property type="entry name" value="HIT family - CDH-like"/>
    <property type="match status" value="1"/>
</dbReference>
<dbReference type="HAMAP" id="MF_00319">
    <property type="entry name" value="Cdh"/>
    <property type="match status" value="1"/>
</dbReference>
<dbReference type="InterPro" id="IPR003763">
    <property type="entry name" value="CDP-diacylglyc_Pase"/>
</dbReference>
<dbReference type="InterPro" id="IPR015993">
    <property type="entry name" value="CDP-diacylglyc_Pase_proteobac"/>
</dbReference>
<dbReference type="InterPro" id="IPR036265">
    <property type="entry name" value="HIT-like_sf"/>
</dbReference>
<dbReference type="NCBIfam" id="TIGR00672">
    <property type="entry name" value="cdh"/>
    <property type="match status" value="1"/>
</dbReference>
<dbReference type="NCBIfam" id="NF003986">
    <property type="entry name" value="PRK05471.1-5"/>
    <property type="match status" value="1"/>
</dbReference>
<dbReference type="Pfam" id="PF02611">
    <property type="entry name" value="CDH"/>
    <property type="match status" value="1"/>
</dbReference>
<dbReference type="PIRSF" id="PIRSF001273">
    <property type="entry name" value="CDH"/>
    <property type="match status" value="1"/>
</dbReference>
<dbReference type="SUPFAM" id="SSF54197">
    <property type="entry name" value="HIT-like"/>
    <property type="match status" value="1"/>
</dbReference>
<gene>
    <name type="primary">cdh</name>
    <name type="ordered locus">HP_0871</name>
</gene>
<protein>
    <recommendedName>
        <fullName>CDP-diacylglycerol pyrophosphatase</fullName>
        <ecNumber>3.6.1.26</ecNumber>
    </recommendedName>
    <alternativeName>
        <fullName>CDP-diacylglycerol phosphatidylhydrolase</fullName>
    </alternativeName>
    <alternativeName>
        <fullName>CDP-diglyceride hydrolase</fullName>
    </alternativeName>
</protein>
<evidence type="ECO:0000250" key="1"/>
<evidence type="ECO:0000255" key="2"/>
<evidence type="ECO:0000305" key="3"/>
<reference key="1">
    <citation type="journal article" date="1997" name="Nature">
        <title>The complete genome sequence of the gastric pathogen Helicobacter pylori.</title>
        <authorList>
            <person name="Tomb J.-F."/>
            <person name="White O."/>
            <person name="Kerlavage A.R."/>
            <person name="Clayton R.A."/>
            <person name="Sutton G.G."/>
            <person name="Fleischmann R.D."/>
            <person name="Ketchum K.A."/>
            <person name="Klenk H.-P."/>
            <person name="Gill S.R."/>
            <person name="Dougherty B.A."/>
            <person name="Nelson K.E."/>
            <person name="Quackenbush J."/>
            <person name="Zhou L."/>
            <person name="Kirkness E.F."/>
            <person name="Peterson S.N."/>
            <person name="Loftus B.J."/>
            <person name="Richardson D.L."/>
            <person name="Dodson R.J."/>
            <person name="Khalak H.G."/>
            <person name="Glodek A."/>
            <person name="McKenney K."/>
            <person name="FitzGerald L.M."/>
            <person name="Lee N."/>
            <person name="Adams M.D."/>
            <person name="Hickey E.K."/>
            <person name="Berg D.E."/>
            <person name="Gocayne J.D."/>
            <person name="Utterback T.R."/>
            <person name="Peterson J.D."/>
            <person name="Kelley J.M."/>
            <person name="Cotton M.D."/>
            <person name="Weidman J.F."/>
            <person name="Fujii C."/>
            <person name="Bowman C."/>
            <person name="Watthey L."/>
            <person name="Wallin E."/>
            <person name="Hayes W.S."/>
            <person name="Borodovsky M."/>
            <person name="Karp P.D."/>
            <person name="Smith H.O."/>
            <person name="Fraser C.M."/>
            <person name="Venter J.C."/>
        </authorList>
    </citation>
    <scope>NUCLEOTIDE SEQUENCE [LARGE SCALE GENOMIC DNA]</scope>
    <source>
        <strain>ATCC 700392 / 26695</strain>
    </source>
</reference>
<reference key="2">
    <citation type="journal article" date="1994" name="Mol. Microbiol.">
        <title>Non-motile mutants of Helicobacter pylori and Helicobacter mustelae defective in flagellar hook production.</title>
        <authorList>
            <person name="O'Toole P.W."/>
            <person name="Kostrzynska M."/>
            <person name="Trust T.J."/>
        </authorList>
    </citation>
    <scope>NUCLEOTIDE SEQUENCE [GENOMIC DNA] OF 210-244</scope>
    <source>
        <strain>951</strain>
        <strain>DSM 4867 / CCUG 17874 / NCTC 11638</strain>
    </source>
</reference>